<organism>
    <name type="scientific">Levilactobacillus brevis (strain ATCC 367 / BCRC 12310 / CIP 105137 / JCM 1170 / LMG 11437 / NCIMB 947 / NCTC 947)</name>
    <name type="common">Lactobacillus brevis</name>
    <dbReference type="NCBI Taxonomy" id="387344"/>
    <lineage>
        <taxon>Bacteria</taxon>
        <taxon>Bacillati</taxon>
        <taxon>Bacillota</taxon>
        <taxon>Bacilli</taxon>
        <taxon>Lactobacillales</taxon>
        <taxon>Lactobacillaceae</taxon>
        <taxon>Levilactobacillus</taxon>
    </lineage>
</organism>
<keyword id="KW-0521">NADP</keyword>
<keyword id="KW-0560">Oxidoreductase</keyword>
<keyword id="KW-1185">Reference proteome</keyword>
<sequence length="328" mass="36006">MHPAEVFDYEDIQLVPNKCIIDSRSEADTSIEFGPRRFKIPVVPANMETVINEPLAVWLAEHDYFYVMHRFQPEDRRGFIERMQAKSLFASISVGVKPEEVTFIDELATAGLTPEYITIDIAHGHSDAVIRMIHHIKQQLPNSFVIAGNVGTPEAVRELENAGADATKVGIGPGKACITKLKTGFGTGGWQLAAVRLCAKAARKPIVADGGIRYNGDIAKSIRFGASMVMIGSMLAGHEQSPGSLLTIDGRTFKQYWGSASEKQKGAYRNVEGKQMLVPYRGDIDQTLTAMEEDLQSAISYAGGRNLLDIRTVDYVIVKSSILNGDNY</sequence>
<feature type="chain" id="PRO_0000292050" description="GMP reductase">
    <location>
        <begin position="1"/>
        <end position="328"/>
    </location>
</feature>
<feature type="active site" description="Thioimidate intermediate" evidence="1">
    <location>
        <position position="177"/>
    </location>
</feature>
<feature type="binding site" evidence="1">
    <location>
        <begin position="206"/>
        <end position="229"/>
    </location>
    <ligand>
        <name>NADP(+)</name>
        <dbReference type="ChEBI" id="CHEBI:58349"/>
    </ligand>
</feature>
<dbReference type="EC" id="1.7.1.7" evidence="1"/>
<dbReference type="EMBL" id="CP000416">
    <property type="protein sequence ID" value="ABJ63392.1"/>
    <property type="molecule type" value="Genomic_DNA"/>
</dbReference>
<dbReference type="RefSeq" id="WP_011667020.1">
    <property type="nucleotide sequence ID" value="NC_008497.1"/>
</dbReference>
<dbReference type="SMR" id="Q03TT0"/>
<dbReference type="STRING" id="387344.LVIS_0226"/>
<dbReference type="KEGG" id="lbr:LVIS_0226"/>
<dbReference type="PATRIC" id="fig|387344.15.peg.222"/>
<dbReference type="eggNOG" id="COG0516">
    <property type="taxonomic scope" value="Bacteria"/>
</dbReference>
<dbReference type="HOGENOM" id="CLU_022552_5_0_9"/>
<dbReference type="Proteomes" id="UP000001652">
    <property type="component" value="Chromosome"/>
</dbReference>
<dbReference type="GO" id="GO:0005829">
    <property type="term" value="C:cytosol"/>
    <property type="evidence" value="ECO:0007669"/>
    <property type="project" value="TreeGrafter"/>
</dbReference>
<dbReference type="GO" id="GO:1902560">
    <property type="term" value="C:GMP reductase complex"/>
    <property type="evidence" value="ECO:0007669"/>
    <property type="project" value="InterPro"/>
</dbReference>
<dbReference type="GO" id="GO:0003920">
    <property type="term" value="F:GMP reductase activity"/>
    <property type="evidence" value="ECO:0007669"/>
    <property type="project" value="UniProtKB-UniRule"/>
</dbReference>
<dbReference type="GO" id="GO:0006163">
    <property type="term" value="P:purine nucleotide metabolic process"/>
    <property type="evidence" value="ECO:0007669"/>
    <property type="project" value="UniProtKB-UniRule"/>
</dbReference>
<dbReference type="CDD" id="cd00381">
    <property type="entry name" value="IMPDH"/>
    <property type="match status" value="1"/>
</dbReference>
<dbReference type="FunFam" id="3.20.20.70:FF:000424">
    <property type="entry name" value="Inosine-5'-monophosphate dehydrogenase 2"/>
    <property type="match status" value="1"/>
</dbReference>
<dbReference type="Gene3D" id="3.20.20.70">
    <property type="entry name" value="Aldolase class I"/>
    <property type="match status" value="1"/>
</dbReference>
<dbReference type="HAMAP" id="MF_01511">
    <property type="entry name" value="GMP_reduct_type2"/>
    <property type="match status" value="1"/>
</dbReference>
<dbReference type="InterPro" id="IPR013785">
    <property type="entry name" value="Aldolase_TIM"/>
</dbReference>
<dbReference type="InterPro" id="IPR050139">
    <property type="entry name" value="GMP_reductase"/>
</dbReference>
<dbReference type="InterPro" id="IPR005994">
    <property type="entry name" value="GuaC_type_2"/>
</dbReference>
<dbReference type="InterPro" id="IPR015875">
    <property type="entry name" value="IMP_DH/GMP_Rdtase_CS"/>
</dbReference>
<dbReference type="InterPro" id="IPR001093">
    <property type="entry name" value="IMP_DH_GMPRt"/>
</dbReference>
<dbReference type="NCBIfam" id="TIGR01306">
    <property type="entry name" value="GMP_reduct_2"/>
    <property type="match status" value="1"/>
</dbReference>
<dbReference type="NCBIfam" id="NF003966">
    <property type="entry name" value="PRK05458.1"/>
    <property type="match status" value="1"/>
</dbReference>
<dbReference type="PANTHER" id="PTHR43170">
    <property type="entry name" value="GMP REDUCTASE"/>
    <property type="match status" value="1"/>
</dbReference>
<dbReference type="PANTHER" id="PTHR43170:SF5">
    <property type="entry name" value="GMP REDUCTASE"/>
    <property type="match status" value="1"/>
</dbReference>
<dbReference type="Pfam" id="PF00478">
    <property type="entry name" value="IMPDH"/>
    <property type="match status" value="1"/>
</dbReference>
<dbReference type="PIRSF" id="PIRSF036500">
    <property type="entry name" value="GMP_red_Firmic"/>
    <property type="match status" value="1"/>
</dbReference>
<dbReference type="SMART" id="SM01240">
    <property type="entry name" value="IMPDH"/>
    <property type="match status" value="1"/>
</dbReference>
<dbReference type="SUPFAM" id="SSF51412">
    <property type="entry name" value="Inosine monophosphate dehydrogenase (IMPDH)"/>
    <property type="match status" value="1"/>
</dbReference>
<dbReference type="PROSITE" id="PS00487">
    <property type="entry name" value="IMP_DH_GMP_RED"/>
    <property type="match status" value="1"/>
</dbReference>
<gene>
    <name evidence="1" type="primary">guaC</name>
    <name type="ordered locus">LVIS_0226</name>
</gene>
<name>GUAC_LEVBA</name>
<evidence type="ECO:0000255" key="1">
    <source>
        <dbReference type="HAMAP-Rule" id="MF_01511"/>
    </source>
</evidence>
<proteinExistence type="inferred from homology"/>
<protein>
    <recommendedName>
        <fullName evidence="1">GMP reductase</fullName>
        <ecNumber evidence="1">1.7.1.7</ecNumber>
    </recommendedName>
    <alternativeName>
        <fullName evidence="1">Guanosine 5'-monophosphate oxidoreductase</fullName>
        <shortName evidence="1">Guanosine monophosphate reductase</shortName>
    </alternativeName>
</protein>
<accession>Q03TT0</accession>
<comment type="function">
    <text evidence="1">Catalyzes the irreversible NADPH-dependent deamination of GMP to IMP. It functions in the conversion of nucleobase, nucleoside and nucleotide derivatives of G to A nucleotides, and in maintaining the intracellular balance of A and G nucleotides.</text>
</comment>
<comment type="catalytic activity">
    <reaction evidence="1">
        <text>IMP + NH4(+) + NADP(+) = GMP + NADPH + 2 H(+)</text>
        <dbReference type="Rhea" id="RHEA:17185"/>
        <dbReference type="ChEBI" id="CHEBI:15378"/>
        <dbReference type="ChEBI" id="CHEBI:28938"/>
        <dbReference type="ChEBI" id="CHEBI:57783"/>
        <dbReference type="ChEBI" id="CHEBI:58053"/>
        <dbReference type="ChEBI" id="CHEBI:58115"/>
        <dbReference type="ChEBI" id="CHEBI:58349"/>
        <dbReference type="EC" id="1.7.1.7"/>
    </reaction>
</comment>
<comment type="similarity">
    <text evidence="1">Belongs to the IMPDH/GMPR family. GuaC type 2 subfamily.</text>
</comment>
<reference key="1">
    <citation type="journal article" date="2006" name="Proc. Natl. Acad. Sci. U.S.A.">
        <title>Comparative genomics of the lactic acid bacteria.</title>
        <authorList>
            <person name="Makarova K.S."/>
            <person name="Slesarev A."/>
            <person name="Wolf Y.I."/>
            <person name="Sorokin A."/>
            <person name="Mirkin B."/>
            <person name="Koonin E.V."/>
            <person name="Pavlov A."/>
            <person name="Pavlova N."/>
            <person name="Karamychev V."/>
            <person name="Polouchine N."/>
            <person name="Shakhova V."/>
            <person name="Grigoriev I."/>
            <person name="Lou Y."/>
            <person name="Rohksar D."/>
            <person name="Lucas S."/>
            <person name="Huang K."/>
            <person name="Goodstein D.M."/>
            <person name="Hawkins T."/>
            <person name="Plengvidhya V."/>
            <person name="Welker D."/>
            <person name="Hughes J."/>
            <person name="Goh Y."/>
            <person name="Benson A."/>
            <person name="Baldwin K."/>
            <person name="Lee J.-H."/>
            <person name="Diaz-Muniz I."/>
            <person name="Dosti B."/>
            <person name="Smeianov V."/>
            <person name="Wechter W."/>
            <person name="Barabote R."/>
            <person name="Lorca G."/>
            <person name="Altermann E."/>
            <person name="Barrangou R."/>
            <person name="Ganesan B."/>
            <person name="Xie Y."/>
            <person name="Rawsthorne H."/>
            <person name="Tamir D."/>
            <person name="Parker C."/>
            <person name="Breidt F."/>
            <person name="Broadbent J.R."/>
            <person name="Hutkins R."/>
            <person name="O'Sullivan D."/>
            <person name="Steele J."/>
            <person name="Unlu G."/>
            <person name="Saier M.H. Jr."/>
            <person name="Klaenhammer T."/>
            <person name="Richardson P."/>
            <person name="Kozyavkin S."/>
            <person name="Weimer B.C."/>
            <person name="Mills D.A."/>
        </authorList>
    </citation>
    <scope>NUCLEOTIDE SEQUENCE [LARGE SCALE GENOMIC DNA]</scope>
    <source>
        <strain>ATCC 367 / BCRC 12310 / CIP 105137 / JCM 1170 / LMG 11437 / NCIMB 947 / NCTC 947</strain>
    </source>
</reference>